<name>ATPE_HELAN</name>
<gene>
    <name evidence="1" type="primary">atpE</name>
</gene>
<evidence type="ECO:0000255" key="1">
    <source>
        <dbReference type="HAMAP-Rule" id="MF_00530"/>
    </source>
</evidence>
<dbReference type="EMBL" id="DQ383815">
    <property type="protein sequence ID" value="ABD47152.1"/>
    <property type="molecule type" value="Genomic_DNA"/>
</dbReference>
<dbReference type="RefSeq" id="YP_588123.1">
    <property type="nucleotide sequence ID" value="NC_007977.1"/>
</dbReference>
<dbReference type="SMR" id="Q1KXV3"/>
<dbReference type="EnsemblPlants" id="mRNA:HanXRQr2_Chr13g0602011">
    <property type="protein sequence ID" value="CDS:HanXRQr2_Chr13g0602011.1"/>
    <property type="gene ID" value="HanXRQr2_Chr13g0602011"/>
</dbReference>
<dbReference type="GeneID" id="4055707"/>
<dbReference type="Gramene" id="mRNA:HanXRQr2_Chr13g0602011">
    <property type="protein sequence ID" value="CDS:HanXRQr2_Chr13g0602011.1"/>
    <property type="gene ID" value="HanXRQr2_Chr13g0602011"/>
</dbReference>
<dbReference type="KEGG" id="han:4055707"/>
<dbReference type="OrthoDB" id="423436at2759"/>
<dbReference type="PhylomeDB" id="Q1KXV3"/>
<dbReference type="GO" id="GO:0009535">
    <property type="term" value="C:chloroplast thylakoid membrane"/>
    <property type="evidence" value="ECO:0007669"/>
    <property type="project" value="UniProtKB-SubCell"/>
</dbReference>
<dbReference type="GO" id="GO:0045259">
    <property type="term" value="C:proton-transporting ATP synthase complex"/>
    <property type="evidence" value="ECO:0007669"/>
    <property type="project" value="UniProtKB-KW"/>
</dbReference>
<dbReference type="GO" id="GO:0005524">
    <property type="term" value="F:ATP binding"/>
    <property type="evidence" value="ECO:0007669"/>
    <property type="project" value="UniProtKB-UniRule"/>
</dbReference>
<dbReference type="GO" id="GO:0046933">
    <property type="term" value="F:proton-transporting ATP synthase activity, rotational mechanism"/>
    <property type="evidence" value="ECO:0007669"/>
    <property type="project" value="UniProtKB-UniRule"/>
</dbReference>
<dbReference type="CDD" id="cd12152">
    <property type="entry name" value="F1-ATPase_delta"/>
    <property type="match status" value="1"/>
</dbReference>
<dbReference type="FunFam" id="2.60.15.10:FF:000002">
    <property type="entry name" value="ATP synthase epsilon chain, chloroplastic"/>
    <property type="match status" value="1"/>
</dbReference>
<dbReference type="Gene3D" id="6.10.140.480">
    <property type="match status" value="1"/>
</dbReference>
<dbReference type="Gene3D" id="2.60.15.10">
    <property type="entry name" value="F0F1 ATP synthase delta/epsilon subunit, N-terminal"/>
    <property type="match status" value="1"/>
</dbReference>
<dbReference type="HAMAP" id="MF_00530">
    <property type="entry name" value="ATP_synth_epsil_bac"/>
    <property type="match status" value="1"/>
</dbReference>
<dbReference type="InterPro" id="IPR001469">
    <property type="entry name" value="ATP_synth_F1_dsu/esu"/>
</dbReference>
<dbReference type="InterPro" id="IPR020546">
    <property type="entry name" value="ATP_synth_F1_dsu/esu_N"/>
</dbReference>
<dbReference type="InterPro" id="IPR020547">
    <property type="entry name" value="ATP_synth_F1_esu_C"/>
</dbReference>
<dbReference type="InterPro" id="IPR036771">
    <property type="entry name" value="ATPsynth_dsu/esu_N"/>
</dbReference>
<dbReference type="NCBIfam" id="TIGR01216">
    <property type="entry name" value="ATP_synt_epsi"/>
    <property type="match status" value="1"/>
</dbReference>
<dbReference type="PANTHER" id="PTHR13822">
    <property type="entry name" value="ATP SYNTHASE DELTA/EPSILON CHAIN"/>
    <property type="match status" value="1"/>
</dbReference>
<dbReference type="PANTHER" id="PTHR13822:SF10">
    <property type="entry name" value="ATP SYNTHASE EPSILON CHAIN, CHLOROPLASTIC"/>
    <property type="match status" value="1"/>
</dbReference>
<dbReference type="Pfam" id="PF00401">
    <property type="entry name" value="ATP-synt_DE"/>
    <property type="match status" value="1"/>
</dbReference>
<dbReference type="Pfam" id="PF02823">
    <property type="entry name" value="ATP-synt_DE_N"/>
    <property type="match status" value="1"/>
</dbReference>
<dbReference type="SUPFAM" id="SSF51344">
    <property type="entry name" value="Epsilon subunit of F1F0-ATP synthase N-terminal domain"/>
    <property type="match status" value="1"/>
</dbReference>
<feature type="chain" id="PRO_0000275202" description="ATP synthase epsilon chain, chloroplastic">
    <location>
        <begin position="1"/>
        <end position="133"/>
    </location>
</feature>
<accession>Q1KXV3</accession>
<sequence length="133" mass="14570">MTLNLCVLTPNRIVWDSEVKEIILSTNSGQIGVLPNHAPIATAVDIGILRIRLNDQWLTMALMGGFARIGNNEITVLVNDAEKSSDIDPQEAQQTLEIAEAALRKAEGKRQTIEANLALRRARTRVEAINAIS</sequence>
<reference key="1">
    <citation type="submission" date="2006-01" db="EMBL/GenBank/DDBJ databases">
        <title>A comparison of the first two published chloroplast genomes in Asteraceae: Lactuca and Helianthus.</title>
        <authorList>
            <person name="Timme R.E."/>
            <person name="Kuehl J.V."/>
            <person name="Boore J.L."/>
            <person name="Jansen R.K."/>
        </authorList>
    </citation>
    <scope>NUCLEOTIDE SEQUENCE [LARGE SCALE GENOMIC DNA]</scope>
    <source>
        <strain>cv. HA383</strain>
    </source>
</reference>
<comment type="function">
    <text evidence="1">Produces ATP from ADP in the presence of a proton gradient across the membrane.</text>
</comment>
<comment type="subunit">
    <text evidence="1">F-type ATPases have 2 components, CF(1) - the catalytic core - and CF(0) - the membrane proton channel. CF(1) has five subunits: alpha(3), beta(3), gamma(1), delta(1), epsilon(1). CF(0) has three main subunits: a, b and c.</text>
</comment>
<comment type="subcellular location">
    <subcellularLocation>
        <location evidence="1">Plastid</location>
        <location evidence="1">Chloroplast thylakoid membrane</location>
        <topology evidence="1">Peripheral membrane protein</topology>
    </subcellularLocation>
</comment>
<comment type="similarity">
    <text evidence="1">Belongs to the ATPase epsilon chain family.</text>
</comment>
<proteinExistence type="inferred from homology"/>
<geneLocation type="chloroplast"/>
<organism>
    <name type="scientific">Helianthus annuus</name>
    <name type="common">Common sunflower</name>
    <dbReference type="NCBI Taxonomy" id="4232"/>
    <lineage>
        <taxon>Eukaryota</taxon>
        <taxon>Viridiplantae</taxon>
        <taxon>Streptophyta</taxon>
        <taxon>Embryophyta</taxon>
        <taxon>Tracheophyta</taxon>
        <taxon>Spermatophyta</taxon>
        <taxon>Magnoliopsida</taxon>
        <taxon>eudicotyledons</taxon>
        <taxon>Gunneridae</taxon>
        <taxon>Pentapetalae</taxon>
        <taxon>asterids</taxon>
        <taxon>campanulids</taxon>
        <taxon>Asterales</taxon>
        <taxon>Asteraceae</taxon>
        <taxon>Asteroideae</taxon>
        <taxon>Heliantheae alliance</taxon>
        <taxon>Heliantheae</taxon>
        <taxon>Helianthus</taxon>
    </lineage>
</organism>
<protein>
    <recommendedName>
        <fullName evidence="1">ATP synthase epsilon chain, chloroplastic</fullName>
    </recommendedName>
    <alternativeName>
        <fullName evidence="1">ATP synthase F1 sector epsilon subunit</fullName>
    </alternativeName>
    <alternativeName>
        <fullName evidence="1">F-ATPase epsilon subunit</fullName>
    </alternativeName>
</protein>
<keyword id="KW-0066">ATP synthesis</keyword>
<keyword id="KW-0139">CF(1)</keyword>
<keyword id="KW-0150">Chloroplast</keyword>
<keyword id="KW-0375">Hydrogen ion transport</keyword>
<keyword id="KW-0406">Ion transport</keyword>
<keyword id="KW-0472">Membrane</keyword>
<keyword id="KW-0934">Plastid</keyword>
<keyword id="KW-0793">Thylakoid</keyword>
<keyword id="KW-0813">Transport</keyword>